<organism>
    <name type="scientific">Pseudomonas syringae pv. syringae (strain B728a)</name>
    <dbReference type="NCBI Taxonomy" id="205918"/>
    <lineage>
        <taxon>Bacteria</taxon>
        <taxon>Pseudomonadati</taxon>
        <taxon>Pseudomonadota</taxon>
        <taxon>Gammaproteobacteria</taxon>
        <taxon>Pseudomonadales</taxon>
        <taxon>Pseudomonadaceae</taxon>
        <taxon>Pseudomonas</taxon>
        <taxon>Pseudomonas syringae</taxon>
    </lineage>
</organism>
<proteinExistence type="inferred from homology"/>
<gene>
    <name evidence="1" type="primary">pyrC</name>
    <name type="ordered locus">Psyr_3894</name>
</gene>
<keyword id="KW-0378">Hydrolase</keyword>
<keyword id="KW-0479">Metal-binding</keyword>
<keyword id="KW-0665">Pyrimidine biosynthesis</keyword>
<keyword id="KW-0862">Zinc</keyword>
<reference key="1">
    <citation type="journal article" date="2005" name="Proc. Natl. Acad. Sci. U.S.A.">
        <title>Comparison of the complete genome sequences of Pseudomonas syringae pv. syringae B728a and pv. tomato DC3000.</title>
        <authorList>
            <person name="Feil H."/>
            <person name="Feil W.S."/>
            <person name="Chain P."/>
            <person name="Larimer F."/>
            <person name="Dibartolo G."/>
            <person name="Copeland A."/>
            <person name="Lykidis A."/>
            <person name="Trong S."/>
            <person name="Nolan M."/>
            <person name="Goltsman E."/>
            <person name="Thiel J."/>
            <person name="Malfatti S."/>
            <person name="Loper J.E."/>
            <person name="Lapidus A."/>
            <person name="Detter J.C."/>
            <person name="Land M."/>
            <person name="Richardson P.M."/>
            <person name="Kyrpides N.C."/>
            <person name="Ivanova N."/>
            <person name="Lindow S.E."/>
        </authorList>
    </citation>
    <scope>NUCLEOTIDE SEQUENCE [LARGE SCALE GENOMIC DNA]</scope>
    <source>
        <strain>B728a</strain>
    </source>
</reference>
<sequence>MSDRLTLLRPDDWHIHLRDGAVLPHTVADVARTFGRAIIMPNLVPPVRNAQQADAYRQRILAARPATSRFEPLMVLYLTDQTTPDDIRTAKASGFVYAAKLYPAGATTNSDSGVTSIDKIFPALEAMADVGMLLLVHGEVTRGEIDVFDREKVFIDEHLRRVVERFPSLKVVFEHITTGEAVQFVNEASANVAATITAHHLLYNRNHMLVGGIRPHFYCLPILKRNTHQTALLDAATSGSGKFFLGTDSAPHAQHAKENACGCAGCYTAYAAIELYAEAFEQRNALDKLEGFASLHGPAFYGLPANQDTITLVRDEWTAPASLPFGELTVIPLRAGETLRWRLEEHA</sequence>
<accession>Q4ZPJ8</accession>
<feature type="chain" id="PRO_1000024039" description="Dihydroorotase">
    <location>
        <begin position="1"/>
        <end position="347"/>
    </location>
</feature>
<feature type="active site" evidence="1">
    <location>
        <position position="248"/>
    </location>
</feature>
<feature type="binding site" evidence="1">
    <location>
        <position position="14"/>
    </location>
    <ligand>
        <name>Zn(2+)</name>
        <dbReference type="ChEBI" id="CHEBI:29105"/>
        <label>1</label>
    </ligand>
</feature>
<feature type="binding site" evidence="1">
    <location>
        <begin position="16"/>
        <end position="18"/>
    </location>
    <ligand>
        <name>substrate</name>
    </ligand>
</feature>
<feature type="binding site" evidence="1">
    <location>
        <position position="16"/>
    </location>
    <ligand>
        <name>Zn(2+)</name>
        <dbReference type="ChEBI" id="CHEBI:29105"/>
        <label>1</label>
    </ligand>
</feature>
<feature type="binding site" evidence="1">
    <location>
        <position position="42"/>
    </location>
    <ligand>
        <name>substrate</name>
    </ligand>
</feature>
<feature type="binding site" description="via carbamate group" evidence="1">
    <location>
        <position position="100"/>
    </location>
    <ligand>
        <name>Zn(2+)</name>
        <dbReference type="ChEBI" id="CHEBI:29105"/>
        <label>1</label>
    </ligand>
</feature>
<feature type="binding site" description="via carbamate group" evidence="1">
    <location>
        <position position="100"/>
    </location>
    <ligand>
        <name>Zn(2+)</name>
        <dbReference type="ChEBI" id="CHEBI:29105"/>
        <label>2</label>
    </ligand>
</feature>
<feature type="binding site" evidence="1">
    <location>
        <position position="137"/>
    </location>
    <ligand>
        <name>substrate</name>
    </ligand>
</feature>
<feature type="binding site" evidence="1">
    <location>
        <position position="137"/>
    </location>
    <ligand>
        <name>Zn(2+)</name>
        <dbReference type="ChEBI" id="CHEBI:29105"/>
        <label>2</label>
    </ligand>
</feature>
<feature type="binding site" evidence="1">
    <location>
        <position position="175"/>
    </location>
    <ligand>
        <name>Zn(2+)</name>
        <dbReference type="ChEBI" id="CHEBI:29105"/>
        <label>2</label>
    </ligand>
</feature>
<feature type="binding site" evidence="1">
    <location>
        <position position="220"/>
    </location>
    <ligand>
        <name>substrate</name>
    </ligand>
</feature>
<feature type="binding site" evidence="1">
    <location>
        <position position="248"/>
    </location>
    <ligand>
        <name>Zn(2+)</name>
        <dbReference type="ChEBI" id="CHEBI:29105"/>
        <label>1</label>
    </ligand>
</feature>
<feature type="binding site" evidence="1">
    <location>
        <position position="252"/>
    </location>
    <ligand>
        <name>substrate</name>
    </ligand>
</feature>
<feature type="binding site" evidence="1">
    <location>
        <position position="264"/>
    </location>
    <ligand>
        <name>substrate</name>
    </ligand>
</feature>
<feature type="modified residue" description="N6-carboxylysine" evidence="1">
    <location>
        <position position="100"/>
    </location>
</feature>
<comment type="function">
    <text evidence="1">Catalyzes the reversible cyclization of carbamoyl aspartate to dihydroorotate.</text>
</comment>
<comment type="catalytic activity">
    <reaction evidence="1">
        <text>(S)-dihydroorotate + H2O = N-carbamoyl-L-aspartate + H(+)</text>
        <dbReference type="Rhea" id="RHEA:24296"/>
        <dbReference type="ChEBI" id="CHEBI:15377"/>
        <dbReference type="ChEBI" id="CHEBI:15378"/>
        <dbReference type="ChEBI" id="CHEBI:30864"/>
        <dbReference type="ChEBI" id="CHEBI:32814"/>
        <dbReference type="EC" id="3.5.2.3"/>
    </reaction>
</comment>
<comment type="cofactor">
    <cofactor evidence="1">
        <name>Zn(2+)</name>
        <dbReference type="ChEBI" id="CHEBI:29105"/>
    </cofactor>
    <text evidence="1">Binds 2 Zn(2+) ions per subunit.</text>
</comment>
<comment type="pathway">
    <text evidence="1">Pyrimidine metabolism; UMP biosynthesis via de novo pathway; (S)-dihydroorotate from bicarbonate: step 3/3.</text>
</comment>
<comment type="subunit">
    <text evidence="1">Homodimer.</text>
</comment>
<comment type="similarity">
    <text evidence="1">Belongs to the metallo-dependent hydrolases superfamily. DHOase family. Class II DHOase subfamily.</text>
</comment>
<protein>
    <recommendedName>
        <fullName evidence="1">Dihydroorotase</fullName>
        <shortName evidence="1">DHOase</shortName>
        <ecNumber evidence="1">3.5.2.3</ecNumber>
    </recommendedName>
</protein>
<evidence type="ECO:0000255" key="1">
    <source>
        <dbReference type="HAMAP-Rule" id="MF_00219"/>
    </source>
</evidence>
<name>PYRC_PSEU2</name>
<dbReference type="EC" id="3.5.2.3" evidence="1"/>
<dbReference type="EMBL" id="CP000075">
    <property type="protein sequence ID" value="AAY38924.1"/>
    <property type="molecule type" value="Genomic_DNA"/>
</dbReference>
<dbReference type="RefSeq" id="WP_011268723.1">
    <property type="nucleotide sequence ID" value="NC_007005.1"/>
</dbReference>
<dbReference type="RefSeq" id="YP_236962.1">
    <property type="nucleotide sequence ID" value="NC_007005.1"/>
</dbReference>
<dbReference type="SMR" id="Q4ZPJ8"/>
<dbReference type="STRING" id="205918.Psyr_3894"/>
<dbReference type="MEROPS" id="M38.A02"/>
<dbReference type="KEGG" id="psb:Psyr_3894"/>
<dbReference type="PATRIC" id="fig|205918.7.peg.4005"/>
<dbReference type="eggNOG" id="COG0418">
    <property type="taxonomic scope" value="Bacteria"/>
</dbReference>
<dbReference type="HOGENOM" id="CLU_041558_1_0_6"/>
<dbReference type="OrthoDB" id="9808095at2"/>
<dbReference type="UniPathway" id="UPA00070">
    <property type="reaction ID" value="UER00117"/>
</dbReference>
<dbReference type="Proteomes" id="UP000000426">
    <property type="component" value="Chromosome"/>
</dbReference>
<dbReference type="GO" id="GO:0005829">
    <property type="term" value="C:cytosol"/>
    <property type="evidence" value="ECO:0007669"/>
    <property type="project" value="TreeGrafter"/>
</dbReference>
<dbReference type="GO" id="GO:0004151">
    <property type="term" value="F:dihydroorotase activity"/>
    <property type="evidence" value="ECO:0007669"/>
    <property type="project" value="UniProtKB-UniRule"/>
</dbReference>
<dbReference type="GO" id="GO:0008270">
    <property type="term" value="F:zinc ion binding"/>
    <property type="evidence" value="ECO:0007669"/>
    <property type="project" value="UniProtKB-UniRule"/>
</dbReference>
<dbReference type="GO" id="GO:0006207">
    <property type="term" value="P:'de novo' pyrimidine nucleobase biosynthetic process"/>
    <property type="evidence" value="ECO:0007669"/>
    <property type="project" value="TreeGrafter"/>
</dbReference>
<dbReference type="GO" id="GO:0044205">
    <property type="term" value="P:'de novo' UMP biosynthetic process"/>
    <property type="evidence" value="ECO:0007669"/>
    <property type="project" value="UniProtKB-UniRule"/>
</dbReference>
<dbReference type="CDD" id="cd01294">
    <property type="entry name" value="DHOase"/>
    <property type="match status" value="1"/>
</dbReference>
<dbReference type="FunFam" id="3.20.20.140:FF:000006">
    <property type="entry name" value="Dihydroorotase"/>
    <property type="match status" value="1"/>
</dbReference>
<dbReference type="Gene3D" id="3.20.20.140">
    <property type="entry name" value="Metal-dependent hydrolases"/>
    <property type="match status" value="1"/>
</dbReference>
<dbReference type="HAMAP" id="MF_00219">
    <property type="entry name" value="PyrC_classII"/>
    <property type="match status" value="1"/>
</dbReference>
<dbReference type="InterPro" id="IPR006680">
    <property type="entry name" value="Amidohydro-rel"/>
</dbReference>
<dbReference type="InterPro" id="IPR004721">
    <property type="entry name" value="DHOdimr"/>
</dbReference>
<dbReference type="InterPro" id="IPR002195">
    <property type="entry name" value="Dihydroorotase_CS"/>
</dbReference>
<dbReference type="InterPro" id="IPR032466">
    <property type="entry name" value="Metal_Hydrolase"/>
</dbReference>
<dbReference type="NCBIfam" id="TIGR00856">
    <property type="entry name" value="pyrC_dimer"/>
    <property type="match status" value="1"/>
</dbReference>
<dbReference type="PANTHER" id="PTHR43137">
    <property type="entry name" value="DIHYDROOROTASE"/>
    <property type="match status" value="1"/>
</dbReference>
<dbReference type="PANTHER" id="PTHR43137:SF1">
    <property type="entry name" value="DIHYDROOROTASE"/>
    <property type="match status" value="1"/>
</dbReference>
<dbReference type="Pfam" id="PF01979">
    <property type="entry name" value="Amidohydro_1"/>
    <property type="match status" value="1"/>
</dbReference>
<dbReference type="PIRSF" id="PIRSF001237">
    <property type="entry name" value="DHOdimr"/>
    <property type="match status" value="1"/>
</dbReference>
<dbReference type="SUPFAM" id="SSF51556">
    <property type="entry name" value="Metallo-dependent hydrolases"/>
    <property type="match status" value="1"/>
</dbReference>
<dbReference type="PROSITE" id="PS00482">
    <property type="entry name" value="DIHYDROOROTASE_1"/>
    <property type="match status" value="1"/>
</dbReference>
<dbReference type="PROSITE" id="PS00483">
    <property type="entry name" value="DIHYDROOROTASE_2"/>
    <property type="match status" value="1"/>
</dbReference>